<keyword id="KW-0378">Hydrolase</keyword>
<keyword id="KW-0408">Iron</keyword>
<keyword id="KW-0479">Metal-binding</keyword>
<keyword id="KW-1185">Reference proteome</keyword>
<dbReference type="EC" id="3.5.4.39" evidence="1"/>
<dbReference type="EMBL" id="CP000254">
    <property type="protein sequence ID" value="ABD42038.1"/>
    <property type="molecule type" value="Genomic_DNA"/>
</dbReference>
<dbReference type="RefSeq" id="WP_011449296.1">
    <property type="nucleotide sequence ID" value="NC_007796.1"/>
</dbReference>
<dbReference type="SMR" id="Q2FNB7"/>
<dbReference type="FunCoup" id="Q2FNB7">
    <property type="interactions" value="1"/>
</dbReference>
<dbReference type="STRING" id="323259.Mhun_2334"/>
<dbReference type="EnsemblBacteria" id="ABD42038">
    <property type="protein sequence ID" value="ABD42038"/>
    <property type="gene ID" value="Mhun_2334"/>
</dbReference>
<dbReference type="GeneID" id="3923052"/>
<dbReference type="KEGG" id="mhu:Mhun_2334"/>
<dbReference type="eggNOG" id="arCOG04301">
    <property type="taxonomic scope" value="Archaea"/>
</dbReference>
<dbReference type="HOGENOM" id="CLU_062816_1_0_2"/>
<dbReference type="InParanoid" id="Q2FNB7"/>
<dbReference type="OrthoDB" id="53087at2157"/>
<dbReference type="UniPathway" id="UPA00065"/>
<dbReference type="Proteomes" id="UP000001941">
    <property type="component" value="Chromosome"/>
</dbReference>
<dbReference type="GO" id="GO:0003934">
    <property type="term" value="F:GTP cyclohydrolase I activity"/>
    <property type="evidence" value="ECO:0007669"/>
    <property type="project" value="InterPro"/>
</dbReference>
<dbReference type="GO" id="GO:0044682">
    <property type="term" value="F:GTP cyclohydrolase IV activity"/>
    <property type="evidence" value="ECO:0007669"/>
    <property type="project" value="UniProtKB-UniRule"/>
</dbReference>
<dbReference type="GO" id="GO:0005506">
    <property type="term" value="F:iron ion binding"/>
    <property type="evidence" value="ECO:0007669"/>
    <property type="project" value="UniProtKB-UniRule"/>
</dbReference>
<dbReference type="GO" id="GO:2001118">
    <property type="term" value="P:tetrahydromethanopterin biosynthetic process"/>
    <property type="evidence" value="ECO:0007669"/>
    <property type="project" value="UniProtKB-UniRule"/>
</dbReference>
<dbReference type="Gene3D" id="3.10.270.10">
    <property type="entry name" value="Urate Oxidase"/>
    <property type="match status" value="1"/>
</dbReference>
<dbReference type="HAMAP" id="MF_01527_A">
    <property type="entry name" value="GTP_cyclohydrol_A"/>
    <property type="match status" value="1"/>
</dbReference>
<dbReference type="InterPro" id="IPR003801">
    <property type="entry name" value="GTP_cyclohydrolase_FolE2/MptA"/>
</dbReference>
<dbReference type="InterPro" id="IPR022840">
    <property type="entry name" value="GTP_cyclohydrolase_MptA"/>
</dbReference>
<dbReference type="NCBIfam" id="TIGR00294">
    <property type="entry name" value="GTP cyclohydrolase MptA"/>
    <property type="match status" value="1"/>
</dbReference>
<dbReference type="PANTHER" id="PTHR36445">
    <property type="entry name" value="GTP CYCLOHYDROLASE MPTA"/>
    <property type="match status" value="1"/>
</dbReference>
<dbReference type="PANTHER" id="PTHR36445:SF1">
    <property type="entry name" value="GTP CYCLOHYDROLASE MPTA"/>
    <property type="match status" value="1"/>
</dbReference>
<dbReference type="Pfam" id="PF02649">
    <property type="entry name" value="GCHY-1"/>
    <property type="match status" value="1"/>
</dbReference>
<gene>
    <name evidence="1" type="primary">mptA</name>
    <name type="ordered locus">Mhun_2334</name>
</gene>
<accession>Q2FNB7</accession>
<reference key="1">
    <citation type="journal article" date="2016" name="Stand. Genomic Sci.">
        <title>Complete genome sequence of Methanospirillum hungatei type strain JF1.</title>
        <authorList>
            <person name="Gunsalus R.P."/>
            <person name="Cook L.E."/>
            <person name="Crable B."/>
            <person name="Rohlin L."/>
            <person name="McDonald E."/>
            <person name="Mouttaki H."/>
            <person name="Sieber J.R."/>
            <person name="Poweleit N."/>
            <person name="Zhou H."/>
            <person name="Lapidus A.L."/>
            <person name="Daligault H.E."/>
            <person name="Land M."/>
            <person name="Gilna P."/>
            <person name="Ivanova N."/>
            <person name="Kyrpides N."/>
            <person name="Culley D.E."/>
            <person name="McInerney M.J."/>
        </authorList>
    </citation>
    <scope>NUCLEOTIDE SEQUENCE [LARGE SCALE GENOMIC DNA]</scope>
    <source>
        <strain>ATCC 27890 / DSM 864 / NBRC 100397 / JF-1</strain>
    </source>
</reference>
<organism>
    <name type="scientific">Methanospirillum hungatei JF-1 (strain ATCC 27890 / DSM 864 / NBRC 100397 / JF-1)</name>
    <dbReference type="NCBI Taxonomy" id="323259"/>
    <lineage>
        <taxon>Archaea</taxon>
        <taxon>Methanobacteriati</taxon>
        <taxon>Methanobacteriota</taxon>
        <taxon>Stenosarchaea group</taxon>
        <taxon>Methanomicrobia</taxon>
        <taxon>Methanomicrobiales</taxon>
        <taxon>Methanospirillaceae</taxon>
        <taxon>Methanospirillum</taxon>
    </lineage>
</organism>
<feature type="chain" id="PRO_0000289541" description="GTP cyclohydrolase MptA">
    <location>
        <begin position="1"/>
        <end position="328"/>
    </location>
</feature>
<feature type="site" description="May be catalytically important" evidence="1">
    <location>
        <position position="171"/>
    </location>
</feature>
<name>MPTA_METHJ</name>
<sequence length="328" mass="36818">MSLLKTSERGFSRELPDVQSTLPDVRINLTRVGVKNVKKLVEVTRPGKRPVIFISNFDIFVDLPGSLKGANLSRNFEVIDEVLQSAIEGEVKEIEQLCSRVARRLLDKHEYADRTEVQMRSEFMVAGETPVTGTLCQEVVKVFASAIAQRTFKDPIVRKSIGAEVTGMTACPCAQNIMQERAREVMENLDIAKDKIESFFKEVPMATHNQRGRGFLSIETDDESHVKLEKIIMILKQSMSTPIFELLKRGDEGHVVLSAHKNPRFVEDCVREMARRVHAEFGDLPGDSVVTIAQDNEESIHQHDAFAERQATIAELADEINGENLDVS</sequence>
<proteinExistence type="inferred from homology"/>
<comment type="function">
    <text evidence="1">Converts GTP to 7,8-dihydro-D-neopterin 2',3'-cyclic phosphate, the first intermediate in the biosynthesis of coenzyme methanopterin.</text>
</comment>
<comment type="catalytic activity">
    <reaction evidence="1">
        <text>GTP + H2O = 7,8-dihydroneopterin 2',3'-cyclic phosphate + formate + diphosphate + H(+)</text>
        <dbReference type="Rhea" id="RHEA:25860"/>
        <dbReference type="ChEBI" id="CHEBI:15377"/>
        <dbReference type="ChEBI" id="CHEBI:15378"/>
        <dbReference type="ChEBI" id="CHEBI:15740"/>
        <dbReference type="ChEBI" id="CHEBI:33019"/>
        <dbReference type="ChEBI" id="CHEBI:37565"/>
        <dbReference type="ChEBI" id="CHEBI:58854"/>
        <dbReference type="EC" id="3.5.4.39"/>
    </reaction>
</comment>
<comment type="cofactor">
    <cofactor evidence="1">
        <name>Fe(2+)</name>
        <dbReference type="ChEBI" id="CHEBI:29033"/>
    </cofactor>
    <text evidence="1">Binds 1 Fe(2+) ion per subunit.</text>
</comment>
<comment type="pathway">
    <text evidence="1">Cofactor biosynthesis; 5,6,7,8-tetrahydromethanopterin biosynthesis.</text>
</comment>
<comment type="subunit">
    <text evidence="1">Homodimer.</text>
</comment>
<comment type="similarity">
    <text evidence="1">Belongs to the GTP cyclohydrolase IV family.</text>
</comment>
<evidence type="ECO:0000255" key="1">
    <source>
        <dbReference type="HAMAP-Rule" id="MF_01527"/>
    </source>
</evidence>
<protein>
    <recommendedName>
        <fullName evidence="1">GTP cyclohydrolase MptA</fullName>
        <ecNumber evidence="1">3.5.4.39</ecNumber>
    </recommendedName>
    <alternativeName>
        <fullName evidence="1">GTP cyclohydrolase IV</fullName>
    </alternativeName>
</protein>